<protein>
    <recommendedName>
        <fullName evidence="1">Phosphoribosylaminoimidazole-succinocarboxamide synthase</fullName>
        <ecNumber evidence="1">6.3.2.6</ecNumber>
    </recommendedName>
    <alternativeName>
        <fullName evidence="1">SAICAR synthetase</fullName>
    </alternativeName>
</protein>
<evidence type="ECO:0000255" key="1">
    <source>
        <dbReference type="HAMAP-Rule" id="MF_00137"/>
    </source>
</evidence>
<keyword id="KW-0067">ATP-binding</keyword>
<keyword id="KW-0436">Ligase</keyword>
<keyword id="KW-0547">Nucleotide-binding</keyword>
<keyword id="KW-0658">Purine biosynthesis</keyword>
<dbReference type="EC" id="6.3.2.6" evidence="1"/>
<dbReference type="EMBL" id="AP008229">
    <property type="protein sequence ID" value="BAE70584.1"/>
    <property type="molecule type" value="Genomic_DNA"/>
</dbReference>
<dbReference type="SMR" id="Q2NYP3"/>
<dbReference type="KEGG" id="xom:XOO3829"/>
<dbReference type="HOGENOM" id="CLU_045637_0_0_6"/>
<dbReference type="UniPathway" id="UPA00074">
    <property type="reaction ID" value="UER00131"/>
</dbReference>
<dbReference type="GO" id="GO:0005737">
    <property type="term" value="C:cytoplasm"/>
    <property type="evidence" value="ECO:0007669"/>
    <property type="project" value="TreeGrafter"/>
</dbReference>
<dbReference type="GO" id="GO:0005524">
    <property type="term" value="F:ATP binding"/>
    <property type="evidence" value="ECO:0007669"/>
    <property type="project" value="UniProtKB-KW"/>
</dbReference>
<dbReference type="GO" id="GO:0004639">
    <property type="term" value="F:phosphoribosylaminoimidazolesuccinocarboxamide synthase activity"/>
    <property type="evidence" value="ECO:0007669"/>
    <property type="project" value="UniProtKB-UniRule"/>
</dbReference>
<dbReference type="GO" id="GO:0006189">
    <property type="term" value="P:'de novo' IMP biosynthetic process"/>
    <property type="evidence" value="ECO:0007669"/>
    <property type="project" value="UniProtKB-UniRule"/>
</dbReference>
<dbReference type="CDD" id="cd01414">
    <property type="entry name" value="SAICAR_synt_Sc"/>
    <property type="match status" value="1"/>
</dbReference>
<dbReference type="FunFam" id="3.30.200.20:FF:000365">
    <property type="entry name" value="Phosphoribosylaminoimidazole-succinocarboxamide synthase"/>
    <property type="match status" value="1"/>
</dbReference>
<dbReference type="FunFam" id="3.30.470.20:FF:000015">
    <property type="entry name" value="Phosphoribosylaminoimidazole-succinocarboxamide synthase"/>
    <property type="match status" value="1"/>
</dbReference>
<dbReference type="Gene3D" id="3.30.470.20">
    <property type="entry name" value="ATP-grasp fold, B domain"/>
    <property type="match status" value="1"/>
</dbReference>
<dbReference type="Gene3D" id="3.30.200.20">
    <property type="entry name" value="Phosphorylase Kinase, domain 1"/>
    <property type="match status" value="1"/>
</dbReference>
<dbReference type="HAMAP" id="MF_00137">
    <property type="entry name" value="SAICAR_synth"/>
    <property type="match status" value="1"/>
</dbReference>
<dbReference type="InterPro" id="IPR028923">
    <property type="entry name" value="SAICAR_synt/ADE2_N"/>
</dbReference>
<dbReference type="InterPro" id="IPR001636">
    <property type="entry name" value="SAICAR_synth"/>
</dbReference>
<dbReference type="InterPro" id="IPR018236">
    <property type="entry name" value="SAICAR_synthetase_CS"/>
</dbReference>
<dbReference type="NCBIfam" id="NF010568">
    <property type="entry name" value="PRK13961.1"/>
    <property type="match status" value="1"/>
</dbReference>
<dbReference type="NCBIfam" id="TIGR00081">
    <property type="entry name" value="purC"/>
    <property type="match status" value="1"/>
</dbReference>
<dbReference type="PANTHER" id="PTHR43700">
    <property type="entry name" value="PHOSPHORIBOSYLAMINOIMIDAZOLE-SUCCINOCARBOXAMIDE SYNTHASE"/>
    <property type="match status" value="1"/>
</dbReference>
<dbReference type="PANTHER" id="PTHR43700:SF1">
    <property type="entry name" value="PHOSPHORIBOSYLAMINOIMIDAZOLE-SUCCINOCARBOXAMIDE SYNTHASE"/>
    <property type="match status" value="1"/>
</dbReference>
<dbReference type="Pfam" id="PF01259">
    <property type="entry name" value="SAICAR_synt"/>
    <property type="match status" value="1"/>
</dbReference>
<dbReference type="SUPFAM" id="SSF56104">
    <property type="entry name" value="SAICAR synthase-like"/>
    <property type="match status" value="1"/>
</dbReference>
<dbReference type="PROSITE" id="PS01057">
    <property type="entry name" value="SAICAR_SYNTHETASE_1"/>
    <property type="match status" value="1"/>
</dbReference>
<dbReference type="PROSITE" id="PS01058">
    <property type="entry name" value="SAICAR_SYNTHETASE_2"/>
    <property type="match status" value="1"/>
</dbReference>
<reference key="1">
    <citation type="journal article" date="2005" name="Jpn. Agric. Res. Q.">
        <title>Genome sequence of Xanthomonas oryzae pv. oryzae suggests contribution of large numbers of effector genes and insertion sequences to its race diversity.</title>
        <authorList>
            <person name="Ochiai H."/>
            <person name="Inoue Y."/>
            <person name="Takeya M."/>
            <person name="Sasaki A."/>
            <person name="Kaku H."/>
        </authorList>
    </citation>
    <scope>NUCLEOTIDE SEQUENCE [LARGE SCALE GENOMIC DNA]</scope>
    <source>
        <strain>MAFF 311018</strain>
    </source>
</reference>
<feature type="chain" id="PRO_1000018812" description="Phosphoribosylaminoimidazole-succinocarboxamide synthase">
    <location>
        <begin position="1"/>
        <end position="310"/>
    </location>
</feature>
<organism>
    <name type="scientific">Xanthomonas oryzae pv. oryzae (strain MAFF 311018)</name>
    <dbReference type="NCBI Taxonomy" id="342109"/>
    <lineage>
        <taxon>Bacteria</taxon>
        <taxon>Pseudomonadati</taxon>
        <taxon>Pseudomonadota</taxon>
        <taxon>Gammaproteobacteria</taxon>
        <taxon>Lysobacterales</taxon>
        <taxon>Lysobacteraceae</taxon>
        <taxon>Xanthomonas</taxon>
    </lineage>
</organism>
<comment type="catalytic activity">
    <reaction evidence="1">
        <text>5-amino-1-(5-phospho-D-ribosyl)imidazole-4-carboxylate + L-aspartate + ATP = (2S)-2-[5-amino-1-(5-phospho-beta-D-ribosyl)imidazole-4-carboxamido]succinate + ADP + phosphate + 2 H(+)</text>
        <dbReference type="Rhea" id="RHEA:22628"/>
        <dbReference type="ChEBI" id="CHEBI:15378"/>
        <dbReference type="ChEBI" id="CHEBI:29991"/>
        <dbReference type="ChEBI" id="CHEBI:30616"/>
        <dbReference type="ChEBI" id="CHEBI:43474"/>
        <dbReference type="ChEBI" id="CHEBI:58443"/>
        <dbReference type="ChEBI" id="CHEBI:77657"/>
        <dbReference type="ChEBI" id="CHEBI:456216"/>
        <dbReference type="EC" id="6.3.2.6"/>
    </reaction>
</comment>
<comment type="pathway">
    <text evidence="1">Purine metabolism; IMP biosynthesis via de novo pathway; 5-amino-1-(5-phospho-D-ribosyl)imidazole-4-carboxamide from 5-amino-1-(5-phospho-D-ribosyl)imidazole-4-carboxylate: step 1/2.</text>
</comment>
<comment type="similarity">
    <text evidence="1">Belongs to the SAICAR synthetase family.</text>
</comment>
<name>PUR7_XANOM</name>
<proteinExistence type="inferred from homology"/>
<sequence length="310" mass="34483">MPVSTTLLQSDLPGLPLRHRGKVRDVFDIPRDRLPADAPPGDYLLMVATDRLSAFDVVLPDPIPGKGEMLCQVSNFWFHKTEHLMPNHLVDIRVEQVLPEGVDPALYAKRAVVTRKLKPVPVEAIARGYLIGSGWKDYQRTGKISGIELPDGLRQAEKLPEPIFTPSTKAAVGDHDENIDFDAMVKTVGAELAERVRDATLRIYRFAADFAAECGILLADTKFEFGTDADGRLYVMDEMLTPDSSRYWPADQYELGTSPPSYDKQFVRDYLETLDWGKTAPGPSLPADVIDRTRAKYAEALQRLAGISVD</sequence>
<gene>
    <name evidence="1" type="primary">purC</name>
    <name type="ordered locus">XOO3829</name>
</gene>
<accession>Q2NYP3</accession>